<reference key="1">
    <citation type="submission" date="2005-08" db="EMBL/GenBank/DDBJ databases">
        <title>Complete sequence of Chlorobium chlorochromatii CaD3.</title>
        <authorList>
            <consortium name="US DOE Joint Genome Institute"/>
            <person name="Copeland A."/>
            <person name="Lucas S."/>
            <person name="Lapidus A."/>
            <person name="Barry K."/>
            <person name="Detter J.C."/>
            <person name="Glavina T."/>
            <person name="Hammon N."/>
            <person name="Israni S."/>
            <person name="Pitluck S."/>
            <person name="Bryant D."/>
            <person name="Schmutz J."/>
            <person name="Larimer F."/>
            <person name="Land M."/>
            <person name="Kyrpides N."/>
            <person name="Ivanova N."/>
            <person name="Richardson P."/>
        </authorList>
    </citation>
    <scope>NUCLEOTIDE SEQUENCE [LARGE SCALE GENOMIC DNA]</scope>
    <source>
        <strain>CaD3</strain>
    </source>
</reference>
<feature type="chain" id="PRO_1000048400" description="Light-independent protochlorophyllide reductase subunit B">
    <location>
        <begin position="1"/>
        <end position="540"/>
    </location>
</feature>
<feature type="region of interest" description="Disordered" evidence="2">
    <location>
        <begin position="451"/>
        <end position="490"/>
    </location>
</feature>
<feature type="compositionally biased region" description="Low complexity" evidence="2">
    <location>
        <begin position="457"/>
        <end position="481"/>
    </location>
</feature>
<feature type="active site" description="Proton donor" evidence="1">
    <location>
        <position position="292"/>
    </location>
</feature>
<feature type="binding site" evidence="1">
    <location>
        <position position="36"/>
    </location>
    <ligand>
        <name>[4Fe-4S] cluster</name>
        <dbReference type="ChEBI" id="CHEBI:49883"/>
        <note>ligand shared with heterodimeric partner</note>
    </ligand>
</feature>
<feature type="binding site" evidence="1">
    <location>
        <begin position="428"/>
        <end position="429"/>
    </location>
    <ligand>
        <name>substrate</name>
    </ligand>
</feature>
<name>BCHB_CHLCH</name>
<proteinExistence type="inferred from homology"/>
<accession>Q3APL0</accession>
<gene>
    <name evidence="1" type="primary">bchB</name>
    <name type="ordered locus">Cag_1814</name>
</gene>
<organism>
    <name type="scientific">Chlorobium chlorochromatii (strain CaD3)</name>
    <dbReference type="NCBI Taxonomy" id="340177"/>
    <lineage>
        <taxon>Bacteria</taxon>
        <taxon>Pseudomonadati</taxon>
        <taxon>Chlorobiota</taxon>
        <taxon>Chlorobiia</taxon>
        <taxon>Chlorobiales</taxon>
        <taxon>Chlorobiaceae</taxon>
        <taxon>Chlorobium/Pelodictyon group</taxon>
        <taxon>Chlorobium</taxon>
    </lineage>
</organism>
<dbReference type="EC" id="1.3.7.7" evidence="1"/>
<dbReference type="EMBL" id="CP000108">
    <property type="protein sequence ID" value="ABB29065.1"/>
    <property type="molecule type" value="Genomic_DNA"/>
</dbReference>
<dbReference type="SMR" id="Q3APL0"/>
<dbReference type="STRING" id="340177.Cag_1814"/>
<dbReference type="KEGG" id="cch:Cag_1814"/>
<dbReference type="eggNOG" id="COG2710">
    <property type="taxonomic scope" value="Bacteria"/>
</dbReference>
<dbReference type="HOGENOM" id="CLU_025470_0_0_10"/>
<dbReference type="OrthoDB" id="5717231at2"/>
<dbReference type="UniPathway" id="UPA00671"/>
<dbReference type="GO" id="GO:0051539">
    <property type="term" value="F:4 iron, 4 sulfur cluster binding"/>
    <property type="evidence" value="ECO:0007669"/>
    <property type="project" value="UniProtKB-UniRule"/>
</dbReference>
<dbReference type="GO" id="GO:0005524">
    <property type="term" value="F:ATP binding"/>
    <property type="evidence" value="ECO:0007669"/>
    <property type="project" value="UniProtKB-UniRule"/>
</dbReference>
<dbReference type="GO" id="GO:0046872">
    <property type="term" value="F:metal ion binding"/>
    <property type="evidence" value="ECO:0007669"/>
    <property type="project" value="UniProtKB-KW"/>
</dbReference>
<dbReference type="GO" id="GO:0016730">
    <property type="term" value="F:oxidoreductase activity, acting on iron-sulfur proteins as donors"/>
    <property type="evidence" value="ECO:0007669"/>
    <property type="project" value="InterPro"/>
</dbReference>
<dbReference type="GO" id="GO:0016636">
    <property type="term" value="F:oxidoreductase activity, acting on the CH-CH group of donors, iron-sulfur protein as acceptor"/>
    <property type="evidence" value="ECO:0007669"/>
    <property type="project" value="UniProtKB-UniRule"/>
</dbReference>
<dbReference type="GO" id="GO:0036070">
    <property type="term" value="P:light-independent bacteriochlorophyll biosynthetic process"/>
    <property type="evidence" value="ECO:0007669"/>
    <property type="project" value="UniProtKB-UniRule"/>
</dbReference>
<dbReference type="GO" id="GO:0019685">
    <property type="term" value="P:photosynthesis, dark reaction"/>
    <property type="evidence" value="ECO:0007669"/>
    <property type="project" value="InterPro"/>
</dbReference>
<dbReference type="Gene3D" id="1.20.89.20">
    <property type="match status" value="1"/>
</dbReference>
<dbReference type="Gene3D" id="3.40.50.1980">
    <property type="entry name" value="Nitrogenase molybdenum iron protein domain"/>
    <property type="match status" value="3"/>
</dbReference>
<dbReference type="Gene3D" id="1.10.8.550">
    <property type="entry name" value="Proto-chlorophyllide reductase 57 kD subunit B"/>
    <property type="match status" value="1"/>
</dbReference>
<dbReference type="HAMAP" id="MF_00353">
    <property type="entry name" value="ChlB_BchB"/>
    <property type="match status" value="1"/>
</dbReference>
<dbReference type="InterPro" id="IPR050152">
    <property type="entry name" value="ChlB/BchB/BchZ"/>
</dbReference>
<dbReference type="InterPro" id="IPR013580">
    <property type="entry name" value="LI-POR_suB-like_C"/>
</dbReference>
<dbReference type="InterPro" id="IPR000510">
    <property type="entry name" value="Nase/OxRdtase_comp1"/>
</dbReference>
<dbReference type="InterPro" id="IPR042298">
    <property type="entry name" value="P-CP_red_C"/>
</dbReference>
<dbReference type="InterPro" id="IPR005969">
    <property type="entry name" value="Protochl_reductB"/>
</dbReference>
<dbReference type="InterPro" id="IPR016209">
    <property type="entry name" value="Protochlorophyllide_Rdtase"/>
</dbReference>
<dbReference type="NCBIfam" id="TIGR01278">
    <property type="entry name" value="DPOR_BchB"/>
    <property type="match status" value="1"/>
</dbReference>
<dbReference type="NCBIfam" id="NF002789">
    <property type="entry name" value="PRK02910.1-3"/>
    <property type="match status" value="1"/>
</dbReference>
<dbReference type="PANTHER" id="PTHR33712">
    <property type="entry name" value="LIGHT-INDEPENDENT PROTOCHLOROPHYLLIDE REDUCTASE SUBUNIT B"/>
    <property type="match status" value="1"/>
</dbReference>
<dbReference type="PANTHER" id="PTHR33712:SF7">
    <property type="entry name" value="LIGHT-INDEPENDENT PROTOCHLOROPHYLLIDE REDUCTASE SUBUNIT B"/>
    <property type="match status" value="1"/>
</dbReference>
<dbReference type="Pfam" id="PF00148">
    <property type="entry name" value="Oxidored_nitro"/>
    <property type="match status" value="1"/>
</dbReference>
<dbReference type="Pfam" id="PF08369">
    <property type="entry name" value="PCP_red"/>
    <property type="match status" value="1"/>
</dbReference>
<dbReference type="PIRSF" id="PIRSF000163">
    <property type="entry name" value="PCP_ChlB"/>
    <property type="match status" value="1"/>
</dbReference>
<dbReference type="SUPFAM" id="SSF53807">
    <property type="entry name" value="Helical backbone' metal receptor"/>
    <property type="match status" value="1"/>
</dbReference>
<sequence>MRLAFWLYEGTALHGISRVTNSMKGVHTVYHAPQGDDYITATYTMLERTPEFPGLSISVVRGRDLAQGVSRLPNTLQQVEQHYHPELTVIAPSCSTALLQEDLHQLAAHSGVPPEKLMVYALNPFRVSENEAADGLFTELVKRYATAQDKTAMPSVNILGFTSLGFHLRANLTSLIRILQTLGIAVNVVAPWGGSIGDLAKLPAAWLNIAPYREIGANAAAYLEEQFAMPALYDIPIGVNPTLRWIELLLEKINAMAVARGVAPIEMPPLKAFSLDGMSAPSGVPWFARTADMDSFSNKRAFVFGDATHTVGIVKFLRDELGMQICGAGTYLAQHADWMRKELEGYLPGALMVTDRFQDVASVIEDEMPDLVCGTQMERHSCRKLDVPCMVICPPTHIENHLLGYYPFFGFAGADVIADRVYVSCKLGLEKHLIDFFGDAGLEYEEDAPASNVASGVEPSTPSVSSEVSASSSASPEASAPTPSPDGDMVWTDDAEAMLKKVPFFVRKKVRKNTENFARGIGEPTITLEVFRKAKESLGG</sequence>
<keyword id="KW-0004">4Fe-4S</keyword>
<keyword id="KW-0067">ATP-binding</keyword>
<keyword id="KW-0077">Bacteriochlorophyll biosynthesis</keyword>
<keyword id="KW-0149">Chlorophyll biosynthesis</keyword>
<keyword id="KW-0408">Iron</keyword>
<keyword id="KW-0411">Iron-sulfur</keyword>
<keyword id="KW-0479">Metal-binding</keyword>
<keyword id="KW-0547">Nucleotide-binding</keyword>
<keyword id="KW-0560">Oxidoreductase</keyword>
<keyword id="KW-0602">Photosynthesis</keyword>
<protein>
    <recommendedName>
        <fullName evidence="1">Light-independent protochlorophyllide reductase subunit B</fullName>
        <shortName evidence="1">DPOR subunit B</shortName>
        <shortName evidence="1">LI-POR subunit B</shortName>
        <ecNumber evidence="1">1.3.7.7</ecNumber>
    </recommendedName>
</protein>
<comment type="function">
    <text evidence="1">Component of the dark-operative protochlorophyllide reductase (DPOR) that uses Mg-ATP and reduced ferredoxin to reduce ring D of protochlorophyllide (Pchlide) to form chlorophyllide a (Chlide). This reaction is light-independent. The NB-protein (BchN-BchB) is the catalytic component of the complex.</text>
</comment>
<comment type="catalytic activity">
    <reaction evidence="1">
        <text>chlorophyllide a + oxidized 2[4Fe-4S]-[ferredoxin] + 2 ADP + 2 phosphate = protochlorophyllide a + reduced 2[4Fe-4S]-[ferredoxin] + 2 ATP + 2 H2O</text>
        <dbReference type="Rhea" id="RHEA:28202"/>
        <dbReference type="Rhea" id="RHEA-COMP:10002"/>
        <dbReference type="Rhea" id="RHEA-COMP:10004"/>
        <dbReference type="ChEBI" id="CHEBI:15377"/>
        <dbReference type="ChEBI" id="CHEBI:30616"/>
        <dbReference type="ChEBI" id="CHEBI:33722"/>
        <dbReference type="ChEBI" id="CHEBI:33723"/>
        <dbReference type="ChEBI" id="CHEBI:43474"/>
        <dbReference type="ChEBI" id="CHEBI:83348"/>
        <dbReference type="ChEBI" id="CHEBI:83350"/>
        <dbReference type="ChEBI" id="CHEBI:456216"/>
        <dbReference type="EC" id="1.3.7.7"/>
    </reaction>
</comment>
<comment type="cofactor">
    <cofactor evidence="1">
        <name>[4Fe-4S] cluster</name>
        <dbReference type="ChEBI" id="CHEBI:49883"/>
    </cofactor>
    <text evidence="1">Binds 1 [4Fe-4S] cluster per heterodimer. The cluster is bound at the heterodimer interface by residues from both subunits.</text>
</comment>
<comment type="pathway">
    <text evidence="1">Porphyrin-containing compound metabolism; bacteriochlorophyll biosynthesis (light-independent).</text>
</comment>
<comment type="subunit">
    <text evidence="1">Protochlorophyllide reductase is composed of three subunits; BchL, BchN and BchB. Forms a heterotetramer of two BchB and two BchN subunits.</text>
</comment>
<comment type="similarity">
    <text evidence="1">Belongs to the ChlB/BchB/BchZ family.</text>
</comment>
<evidence type="ECO:0000255" key="1">
    <source>
        <dbReference type="HAMAP-Rule" id="MF_00353"/>
    </source>
</evidence>
<evidence type="ECO:0000256" key="2">
    <source>
        <dbReference type="SAM" id="MobiDB-lite"/>
    </source>
</evidence>